<accession>Q6AZW1</accession>
<dbReference type="EMBL" id="BC077152">
    <property type="protein sequence ID" value="AAH77152.1"/>
    <property type="molecule type" value="mRNA"/>
</dbReference>
<dbReference type="RefSeq" id="NP_001003761.1">
    <property type="nucleotide sequence ID" value="NM_001003761.2"/>
</dbReference>
<dbReference type="FunCoup" id="Q6AZW1">
    <property type="interactions" value="179"/>
</dbReference>
<dbReference type="STRING" id="7955.ENSDARP00000076947"/>
<dbReference type="PaxDb" id="7955-ENSDARP00000076947"/>
<dbReference type="Ensembl" id="ENSDART00000082512">
    <property type="protein sequence ID" value="ENSDARP00000076947"/>
    <property type="gene ID" value="ENSDARG00000059400"/>
</dbReference>
<dbReference type="GeneID" id="445304"/>
<dbReference type="KEGG" id="dre:445304"/>
<dbReference type="AGR" id="ZFIN:ZDB-GENE-040808-17"/>
<dbReference type="CTD" id="56900"/>
<dbReference type="ZFIN" id="ZDB-GENE-040808-17">
    <property type="gene designation" value="tmem167b"/>
</dbReference>
<dbReference type="eggNOG" id="KOG3808">
    <property type="taxonomic scope" value="Eukaryota"/>
</dbReference>
<dbReference type="HOGENOM" id="CLU_152663_1_2_1"/>
<dbReference type="InParanoid" id="Q6AZW1"/>
<dbReference type="OMA" id="IVMAFYI"/>
<dbReference type="OrthoDB" id="10034655at2759"/>
<dbReference type="PhylomeDB" id="Q6AZW1"/>
<dbReference type="TreeFam" id="TF300138"/>
<dbReference type="PRO" id="PR:Q6AZW1"/>
<dbReference type="Proteomes" id="UP000000437">
    <property type="component" value="Chromosome 11"/>
</dbReference>
<dbReference type="Bgee" id="ENSDARG00000059400">
    <property type="expression patterns" value="Expressed in caudal fin and 27 other cell types or tissues"/>
</dbReference>
<dbReference type="GO" id="GO:0000139">
    <property type="term" value="C:Golgi membrane"/>
    <property type="evidence" value="ECO:0007669"/>
    <property type="project" value="UniProtKB-SubCell"/>
</dbReference>
<dbReference type="InterPro" id="IPR042863">
    <property type="entry name" value="Kish-B"/>
</dbReference>
<dbReference type="InterPro" id="IPR009653">
    <property type="entry name" value="Ksh1"/>
</dbReference>
<dbReference type="PANTHER" id="PTHR46815">
    <property type="entry name" value="PROTEIN KISH-B"/>
    <property type="match status" value="1"/>
</dbReference>
<dbReference type="PANTHER" id="PTHR46815:SF1">
    <property type="entry name" value="PROTEIN KISH-B"/>
    <property type="match status" value="1"/>
</dbReference>
<dbReference type="Pfam" id="PF06842">
    <property type="entry name" value="DUF1242"/>
    <property type="match status" value="1"/>
</dbReference>
<proteinExistence type="inferred from homology"/>
<evidence type="ECO:0000250" key="1"/>
<evidence type="ECO:0000255" key="2"/>
<evidence type="ECO:0000305" key="3"/>
<protein>
    <recommendedName>
        <fullName>Protein kish-B</fullName>
    </recommendedName>
    <alternativeName>
        <fullName>Transmembrane protein 167B</fullName>
    </alternativeName>
</protein>
<keyword id="KW-0333">Golgi apparatus</keyword>
<keyword id="KW-0472">Membrane</keyword>
<keyword id="KW-1185">Reference proteome</keyword>
<keyword id="KW-0732">Signal</keyword>
<keyword id="KW-0812">Transmembrane</keyword>
<keyword id="KW-1133">Transmembrane helix</keyword>
<gene>
    <name type="primary">tmem167b</name>
    <name type="ORF">zgc:101127</name>
</gene>
<organism>
    <name type="scientific">Danio rerio</name>
    <name type="common">Zebrafish</name>
    <name type="synonym">Brachydanio rerio</name>
    <dbReference type="NCBI Taxonomy" id="7955"/>
    <lineage>
        <taxon>Eukaryota</taxon>
        <taxon>Metazoa</taxon>
        <taxon>Chordata</taxon>
        <taxon>Craniata</taxon>
        <taxon>Vertebrata</taxon>
        <taxon>Euteleostomi</taxon>
        <taxon>Actinopterygii</taxon>
        <taxon>Neopterygii</taxon>
        <taxon>Teleostei</taxon>
        <taxon>Ostariophysi</taxon>
        <taxon>Cypriniformes</taxon>
        <taxon>Danionidae</taxon>
        <taxon>Danioninae</taxon>
        <taxon>Danio</taxon>
    </lineage>
</organism>
<sequence length="74" mass="8342">MTNVYSFDGILVFGLLFICTCAYLKKVPRLNSWLLSEKKGVWGVFYKAAVIGTRLHVVVAASCLCMAFYLIFLK</sequence>
<feature type="signal peptide" evidence="2">
    <location>
        <begin position="1"/>
        <end position="22"/>
    </location>
</feature>
<feature type="chain" id="PRO_0000265084" description="Protein kish-B">
    <location>
        <begin position="23"/>
        <end position="74"/>
    </location>
</feature>
<feature type="topological domain" description="Extracellular" evidence="2">
    <location>
        <begin position="23"/>
        <end position="52"/>
    </location>
</feature>
<feature type="transmembrane region" description="Helical" evidence="2">
    <location>
        <begin position="53"/>
        <end position="73"/>
    </location>
</feature>
<feature type="topological domain" description="Cytoplasmic" evidence="2">
    <location>
        <position position="74"/>
    </location>
</feature>
<name>KISHB_DANRE</name>
<reference key="1">
    <citation type="submission" date="2004-07" db="EMBL/GenBank/DDBJ databases">
        <authorList>
            <consortium name="NIH - Zebrafish Gene Collection (ZGC) project"/>
        </authorList>
    </citation>
    <scope>NUCLEOTIDE SEQUENCE [LARGE SCALE MRNA]</scope>
    <source>
        <tissue>Embryo</tissue>
    </source>
</reference>
<comment type="function">
    <text evidence="1">Involved in the early part of the secretory pathway.</text>
</comment>
<comment type="subcellular location">
    <subcellularLocation>
        <location evidence="1">Golgi apparatus membrane</location>
        <topology evidence="1">Single-pass type I membrane protein</topology>
    </subcellularLocation>
</comment>
<comment type="similarity">
    <text evidence="3">Belongs to the KISH family.</text>
</comment>